<reference key="1">
    <citation type="journal article" date="2011" name="J. Bacteriol.">
        <title>Genome sequence of the verrucomicrobium Opitutus terrae PB90-1, an abundant inhabitant of rice paddy soil ecosystems.</title>
        <authorList>
            <person name="van Passel M.W."/>
            <person name="Kant R."/>
            <person name="Palva A."/>
            <person name="Copeland A."/>
            <person name="Lucas S."/>
            <person name="Lapidus A."/>
            <person name="Glavina del Rio T."/>
            <person name="Pitluck S."/>
            <person name="Goltsman E."/>
            <person name="Clum A."/>
            <person name="Sun H."/>
            <person name="Schmutz J."/>
            <person name="Larimer F.W."/>
            <person name="Land M.L."/>
            <person name="Hauser L."/>
            <person name="Kyrpides N."/>
            <person name="Mikhailova N."/>
            <person name="Richardson P.P."/>
            <person name="Janssen P.H."/>
            <person name="de Vos W.M."/>
            <person name="Smidt H."/>
        </authorList>
    </citation>
    <scope>NUCLEOTIDE SEQUENCE [LARGE SCALE GENOMIC DNA]</scope>
    <source>
        <strain>DSM 11246 / JCM 15787 / PB90-1</strain>
    </source>
</reference>
<sequence length="614" mass="66045">MLPIRWFLALLAVFLAVAGLDLWFSQTGARPSSATGEERLDGAAFLAAANAGELREGHIVYRANSTGLADLHAQRKGAAGAGATHVRATARLTDAEVTALRTQHFAEDDPVSYAAARAVSARERTASIVHAIVHPLGLITLIVGILFVVQRYAGRFTAFSAQRLRPVTSGVSFSSVAGCDEAKDEVYEVVEFLRDPARFRQTGGRMPKGVLLVGPPGTGKTMLAKAVAGEARANFYSLSGSDFVELYVGVGASRVRSLFKKARETAPSIIFIDEIDAIGRQRSAAESGGAQQEHDQTLNALLVAMDGFDSDDAVVVFGATNRPDTMDRALLRPGRFDRQVSVGLPDLRGRLAILQVHAGSVKLDPSVDLQEIAKATPGFSGADLANLLNEGAIHAARHRRATILHSDLDEARDKINWGRETRRVMTVQDKAVIAYHEAGHALMQVLSGEDVVRVQKVTIIPRGRSLGSTHFTPERDLFNYSQPQLIAKLRCLMAGRVAEEIALGSITSGASGDIQEATKTARQMVLEWGMSPLGFMALSRPDGDEPLASPQTFHEAERHVRALLDENYAATTRALTTHRAALDAIADELIRCETILGNDVRRIAAQHPPSALAG</sequence>
<gene>
    <name evidence="1" type="primary">ftsH</name>
    <name type="ordered locus">Oter_0128</name>
</gene>
<dbReference type="EC" id="3.4.24.-" evidence="1"/>
<dbReference type="EMBL" id="CP001032">
    <property type="protein sequence ID" value="ACB73419.1"/>
    <property type="molecule type" value="Genomic_DNA"/>
</dbReference>
<dbReference type="RefSeq" id="WP_012372957.1">
    <property type="nucleotide sequence ID" value="NC_010571.1"/>
</dbReference>
<dbReference type="SMR" id="B1ZMG6"/>
<dbReference type="STRING" id="452637.Oter_0128"/>
<dbReference type="KEGG" id="ote:Oter_0128"/>
<dbReference type="eggNOG" id="COG0465">
    <property type="taxonomic scope" value="Bacteria"/>
</dbReference>
<dbReference type="HOGENOM" id="CLU_000688_16_2_0"/>
<dbReference type="Proteomes" id="UP000007013">
    <property type="component" value="Chromosome"/>
</dbReference>
<dbReference type="GO" id="GO:0005886">
    <property type="term" value="C:plasma membrane"/>
    <property type="evidence" value="ECO:0007669"/>
    <property type="project" value="UniProtKB-SubCell"/>
</dbReference>
<dbReference type="GO" id="GO:0005524">
    <property type="term" value="F:ATP binding"/>
    <property type="evidence" value="ECO:0007669"/>
    <property type="project" value="UniProtKB-UniRule"/>
</dbReference>
<dbReference type="GO" id="GO:0016887">
    <property type="term" value="F:ATP hydrolysis activity"/>
    <property type="evidence" value="ECO:0007669"/>
    <property type="project" value="UniProtKB-UniRule"/>
</dbReference>
<dbReference type="GO" id="GO:0004176">
    <property type="term" value="F:ATP-dependent peptidase activity"/>
    <property type="evidence" value="ECO:0007669"/>
    <property type="project" value="InterPro"/>
</dbReference>
<dbReference type="GO" id="GO:0004222">
    <property type="term" value="F:metalloendopeptidase activity"/>
    <property type="evidence" value="ECO:0007669"/>
    <property type="project" value="InterPro"/>
</dbReference>
<dbReference type="GO" id="GO:0008270">
    <property type="term" value="F:zinc ion binding"/>
    <property type="evidence" value="ECO:0007669"/>
    <property type="project" value="UniProtKB-UniRule"/>
</dbReference>
<dbReference type="GO" id="GO:0030163">
    <property type="term" value="P:protein catabolic process"/>
    <property type="evidence" value="ECO:0007669"/>
    <property type="project" value="UniProtKB-UniRule"/>
</dbReference>
<dbReference type="GO" id="GO:0006508">
    <property type="term" value="P:proteolysis"/>
    <property type="evidence" value="ECO:0007669"/>
    <property type="project" value="UniProtKB-KW"/>
</dbReference>
<dbReference type="CDD" id="cd19501">
    <property type="entry name" value="RecA-like_FtsH"/>
    <property type="match status" value="1"/>
</dbReference>
<dbReference type="FunFam" id="1.10.8.60:FF:000001">
    <property type="entry name" value="ATP-dependent zinc metalloprotease FtsH"/>
    <property type="match status" value="1"/>
</dbReference>
<dbReference type="FunFam" id="3.40.50.300:FF:000001">
    <property type="entry name" value="ATP-dependent zinc metalloprotease FtsH"/>
    <property type="match status" value="1"/>
</dbReference>
<dbReference type="Gene3D" id="1.10.8.60">
    <property type="match status" value="1"/>
</dbReference>
<dbReference type="Gene3D" id="3.40.50.300">
    <property type="entry name" value="P-loop containing nucleotide triphosphate hydrolases"/>
    <property type="match status" value="1"/>
</dbReference>
<dbReference type="Gene3D" id="1.20.58.760">
    <property type="entry name" value="Peptidase M41"/>
    <property type="match status" value="1"/>
</dbReference>
<dbReference type="HAMAP" id="MF_01458">
    <property type="entry name" value="FtsH"/>
    <property type="match status" value="1"/>
</dbReference>
<dbReference type="InterPro" id="IPR003593">
    <property type="entry name" value="AAA+_ATPase"/>
</dbReference>
<dbReference type="InterPro" id="IPR041569">
    <property type="entry name" value="AAA_lid_3"/>
</dbReference>
<dbReference type="InterPro" id="IPR003959">
    <property type="entry name" value="ATPase_AAA_core"/>
</dbReference>
<dbReference type="InterPro" id="IPR003960">
    <property type="entry name" value="ATPase_AAA_CS"/>
</dbReference>
<dbReference type="InterPro" id="IPR005936">
    <property type="entry name" value="FtsH"/>
</dbReference>
<dbReference type="InterPro" id="IPR027417">
    <property type="entry name" value="P-loop_NTPase"/>
</dbReference>
<dbReference type="InterPro" id="IPR000642">
    <property type="entry name" value="Peptidase_M41"/>
</dbReference>
<dbReference type="InterPro" id="IPR037219">
    <property type="entry name" value="Peptidase_M41-like"/>
</dbReference>
<dbReference type="NCBIfam" id="TIGR01241">
    <property type="entry name" value="FtsH_fam"/>
    <property type="match status" value="1"/>
</dbReference>
<dbReference type="PANTHER" id="PTHR23076:SF97">
    <property type="entry name" value="ATP-DEPENDENT ZINC METALLOPROTEASE YME1L1"/>
    <property type="match status" value="1"/>
</dbReference>
<dbReference type="PANTHER" id="PTHR23076">
    <property type="entry name" value="METALLOPROTEASE M41 FTSH"/>
    <property type="match status" value="1"/>
</dbReference>
<dbReference type="Pfam" id="PF00004">
    <property type="entry name" value="AAA"/>
    <property type="match status" value="1"/>
</dbReference>
<dbReference type="Pfam" id="PF17862">
    <property type="entry name" value="AAA_lid_3"/>
    <property type="match status" value="1"/>
</dbReference>
<dbReference type="Pfam" id="PF01434">
    <property type="entry name" value="Peptidase_M41"/>
    <property type="match status" value="1"/>
</dbReference>
<dbReference type="SMART" id="SM00382">
    <property type="entry name" value="AAA"/>
    <property type="match status" value="1"/>
</dbReference>
<dbReference type="SUPFAM" id="SSF140990">
    <property type="entry name" value="FtsH protease domain-like"/>
    <property type="match status" value="1"/>
</dbReference>
<dbReference type="SUPFAM" id="SSF52540">
    <property type="entry name" value="P-loop containing nucleoside triphosphate hydrolases"/>
    <property type="match status" value="1"/>
</dbReference>
<dbReference type="PROSITE" id="PS00674">
    <property type="entry name" value="AAA"/>
    <property type="match status" value="1"/>
</dbReference>
<name>FTSH_OPITP</name>
<comment type="function">
    <text evidence="1">Acts as a processive, ATP-dependent zinc metallopeptidase for both cytoplasmic and membrane proteins. Plays a role in the quality control of integral membrane proteins.</text>
</comment>
<comment type="cofactor">
    <cofactor evidence="1">
        <name>Zn(2+)</name>
        <dbReference type="ChEBI" id="CHEBI:29105"/>
    </cofactor>
    <text evidence="1">Binds 1 zinc ion per subunit.</text>
</comment>
<comment type="subunit">
    <text evidence="1">Homohexamer.</text>
</comment>
<comment type="subcellular location">
    <subcellularLocation>
        <location evidence="1">Cell inner membrane</location>
        <topology evidence="1">Multi-pass membrane protein</topology>
        <orientation evidence="1">Cytoplasmic side</orientation>
    </subcellularLocation>
</comment>
<comment type="similarity">
    <text evidence="1">In the central section; belongs to the AAA ATPase family.</text>
</comment>
<comment type="similarity">
    <text evidence="1">In the C-terminal section; belongs to the peptidase M41 family.</text>
</comment>
<protein>
    <recommendedName>
        <fullName evidence="1">ATP-dependent zinc metalloprotease FtsH</fullName>
        <ecNumber evidence="1">3.4.24.-</ecNumber>
    </recommendedName>
</protein>
<organism>
    <name type="scientific">Opitutus terrae (strain DSM 11246 / JCM 15787 / PB90-1)</name>
    <dbReference type="NCBI Taxonomy" id="452637"/>
    <lineage>
        <taxon>Bacteria</taxon>
        <taxon>Pseudomonadati</taxon>
        <taxon>Verrucomicrobiota</taxon>
        <taxon>Opitutia</taxon>
        <taxon>Opitutales</taxon>
        <taxon>Opitutaceae</taxon>
        <taxon>Opitutus</taxon>
    </lineage>
</organism>
<accession>B1ZMG6</accession>
<keyword id="KW-0067">ATP-binding</keyword>
<keyword id="KW-0997">Cell inner membrane</keyword>
<keyword id="KW-1003">Cell membrane</keyword>
<keyword id="KW-0378">Hydrolase</keyword>
<keyword id="KW-0472">Membrane</keyword>
<keyword id="KW-0479">Metal-binding</keyword>
<keyword id="KW-0482">Metalloprotease</keyword>
<keyword id="KW-0547">Nucleotide-binding</keyword>
<keyword id="KW-0645">Protease</keyword>
<keyword id="KW-1185">Reference proteome</keyword>
<keyword id="KW-0812">Transmembrane</keyword>
<keyword id="KW-1133">Transmembrane helix</keyword>
<keyword id="KW-0862">Zinc</keyword>
<feature type="chain" id="PRO_5000335214" description="ATP-dependent zinc metalloprotease FtsH">
    <location>
        <begin position="1"/>
        <end position="614"/>
    </location>
</feature>
<feature type="topological domain" description="Cytoplasmic" evidence="1">
    <location>
        <begin position="1"/>
        <end position="5"/>
    </location>
</feature>
<feature type="transmembrane region" description="Helical" evidence="1">
    <location>
        <begin position="6"/>
        <end position="26"/>
    </location>
</feature>
<feature type="topological domain" description="Periplasmic" evidence="1">
    <location>
        <begin position="27"/>
        <end position="127"/>
    </location>
</feature>
<feature type="transmembrane region" description="Helical" evidence="1">
    <location>
        <begin position="128"/>
        <end position="148"/>
    </location>
</feature>
<feature type="topological domain" description="Cytoplasmic" evidence="1">
    <location>
        <begin position="149"/>
        <end position="614"/>
    </location>
</feature>
<feature type="active site" evidence="1">
    <location>
        <position position="437"/>
    </location>
</feature>
<feature type="binding site" evidence="1">
    <location>
        <begin position="214"/>
        <end position="221"/>
    </location>
    <ligand>
        <name>ATP</name>
        <dbReference type="ChEBI" id="CHEBI:30616"/>
    </ligand>
</feature>
<feature type="binding site" evidence="1">
    <location>
        <position position="436"/>
    </location>
    <ligand>
        <name>Zn(2+)</name>
        <dbReference type="ChEBI" id="CHEBI:29105"/>
        <note>catalytic</note>
    </ligand>
</feature>
<feature type="binding site" evidence="1">
    <location>
        <position position="440"/>
    </location>
    <ligand>
        <name>Zn(2+)</name>
        <dbReference type="ChEBI" id="CHEBI:29105"/>
        <note>catalytic</note>
    </ligand>
</feature>
<feature type="binding site" evidence="1">
    <location>
        <position position="513"/>
    </location>
    <ligand>
        <name>Zn(2+)</name>
        <dbReference type="ChEBI" id="CHEBI:29105"/>
        <note>catalytic</note>
    </ligand>
</feature>
<evidence type="ECO:0000255" key="1">
    <source>
        <dbReference type="HAMAP-Rule" id="MF_01458"/>
    </source>
</evidence>
<proteinExistence type="inferred from homology"/>